<keyword id="KW-0997">Cell inner membrane</keyword>
<keyword id="KW-1003">Cell membrane</keyword>
<keyword id="KW-0143">Chaperone</keyword>
<keyword id="KW-1015">Disulfide bond</keyword>
<keyword id="KW-0249">Electron transport</keyword>
<keyword id="KW-0472">Membrane</keyword>
<keyword id="KW-0560">Oxidoreductase</keyword>
<keyword id="KW-0676">Redox-active center</keyword>
<keyword id="KW-0812">Transmembrane</keyword>
<keyword id="KW-1133">Transmembrane helix</keyword>
<keyword id="KW-0813">Transport</keyword>
<reference key="1">
    <citation type="journal article" date="2004" name="Nat. Biotechnol.">
        <title>The genome sequence of the capnophilic rumen bacterium Mannheimia succiniciproducens.</title>
        <authorList>
            <person name="Hong S.H."/>
            <person name="Kim J.S."/>
            <person name="Lee S.Y."/>
            <person name="In Y.H."/>
            <person name="Choi S.S."/>
            <person name="Rih J.-K."/>
            <person name="Kim C.H."/>
            <person name="Jeong H."/>
            <person name="Hur C.G."/>
            <person name="Kim J.J."/>
        </authorList>
    </citation>
    <scope>NUCLEOTIDE SEQUENCE [LARGE SCALE GENOMIC DNA]</scope>
    <source>
        <strain>KCTC 0769BP / MBEL55E</strain>
    </source>
</reference>
<comment type="function">
    <text evidence="1">Required for disulfide bond formation in some periplasmic proteins. Acts by oxidizing the DsbA protein.</text>
</comment>
<comment type="subcellular location">
    <subcellularLocation>
        <location evidence="1">Cell inner membrane</location>
        <topology evidence="1">Multi-pass membrane protein</topology>
    </subcellularLocation>
</comment>
<comment type="similarity">
    <text evidence="1">Belongs to the DsbB family.</text>
</comment>
<accession>Q65VH4</accession>
<organism>
    <name type="scientific">Mannheimia succiniciproducens (strain KCTC 0769BP / MBEL55E)</name>
    <dbReference type="NCBI Taxonomy" id="221988"/>
    <lineage>
        <taxon>Bacteria</taxon>
        <taxon>Pseudomonadati</taxon>
        <taxon>Pseudomonadota</taxon>
        <taxon>Gammaproteobacteria</taxon>
        <taxon>Pasteurellales</taxon>
        <taxon>Pasteurellaceae</taxon>
        <taxon>Basfia</taxon>
    </lineage>
</organism>
<protein>
    <recommendedName>
        <fullName evidence="1">Disulfide bond formation protein B</fullName>
    </recommendedName>
    <alternativeName>
        <fullName evidence="1">Disulfide oxidoreductase</fullName>
    </alternativeName>
</protein>
<feature type="chain" id="PRO_0000298367" description="Disulfide bond formation protein B">
    <location>
        <begin position="1"/>
        <end position="178"/>
    </location>
</feature>
<feature type="topological domain" description="Cytoplasmic" evidence="1">
    <location>
        <begin position="1"/>
        <end position="14"/>
    </location>
</feature>
<feature type="transmembrane region" description="Helical" evidence="1">
    <location>
        <begin position="15"/>
        <end position="31"/>
    </location>
</feature>
<feature type="topological domain" description="Periplasmic" evidence="1">
    <location>
        <begin position="32"/>
        <end position="49"/>
    </location>
</feature>
<feature type="transmembrane region" description="Helical" evidence="1">
    <location>
        <begin position="50"/>
        <end position="65"/>
    </location>
</feature>
<feature type="topological domain" description="Cytoplasmic" evidence="1">
    <location>
        <begin position="66"/>
        <end position="72"/>
    </location>
</feature>
<feature type="transmembrane region" description="Helical" evidence="1">
    <location>
        <begin position="73"/>
        <end position="90"/>
    </location>
</feature>
<feature type="topological domain" description="Periplasmic" evidence="1">
    <location>
        <begin position="91"/>
        <end position="145"/>
    </location>
</feature>
<feature type="transmembrane region" description="Helical" evidence="1">
    <location>
        <begin position="146"/>
        <end position="164"/>
    </location>
</feature>
<feature type="topological domain" description="Cytoplasmic" evidence="1">
    <location>
        <begin position="165"/>
        <end position="178"/>
    </location>
</feature>
<feature type="disulfide bond" description="Redox-active" evidence="1">
    <location>
        <begin position="41"/>
        <end position="44"/>
    </location>
</feature>
<feature type="disulfide bond" description="Redox-active" evidence="1">
    <location>
        <begin position="105"/>
        <end position="131"/>
    </location>
</feature>
<dbReference type="EMBL" id="AE016827">
    <property type="protein sequence ID" value="AAU37036.1"/>
    <property type="molecule type" value="Genomic_DNA"/>
</dbReference>
<dbReference type="RefSeq" id="WP_011199611.1">
    <property type="nucleotide sequence ID" value="NC_006300.1"/>
</dbReference>
<dbReference type="SMR" id="Q65VH4"/>
<dbReference type="STRING" id="221988.MS0429"/>
<dbReference type="KEGG" id="msu:MS0429"/>
<dbReference type="eggNOG" id="COG1495">
    <property type="taxonomic scope" value="Bacteria"/>
</dbReference>
<dbReference type="HOGENOM" id="CLU_098660_2_0_6"/>
<dbReference type="OrthoDB" id="3711263at2"/>
<dbReference type="Proteomes" id="UP000000607">
    <property type="component" value="Chromosome"/>
</dbReference>
<dbReference type="GO" id="GO:0005886">
    <property type="term" value="C:plasma membrane"/>
    <property type="evidence" value="ECO:0007669"/>
    <property type="project" value="UniProtKB-SubCell"/>
</dbReference>
<dbReference type="GO" id="GO:0009055">
    <property type="term" value="F:electron transfer activity"/>
    <property type="evidence" value="ECO:0007669"/>
    <property type="project" value="UniProtKB-UniRule"/>
</dbReference>
<dbReference type="GO" id="GO:0015035">
    <property type="term" value="F:protein-disulfide reductase activity"/>
    <property type="evidence" value="ECO:0007669"/>
    <property type="project" value="UniProtKB-UniRule"/>
</dbReference>
<dbReference type="GO" id="GO:0006457">
    <property type="term" value="P:protein folding"/>
    <property type="evidence" value="ECO:0007669"/>
    <property type="project" value="InterPro"/>
</dbReference>
<dbReference type="Gene3D" id="1.20.1550.10">
    <property type="entry name" value="DsbB-like"/>
    <property type="match status" value="1"/>
</dbReference>
<dbReference type="HAMAP" id="MF_00286">
    <property type="entry name" value="DsbB"/>
    <property type="match status" value="1"/>
</dbReference>
<dbReference type="InterPro" id="IPR003752">
    <property type="entry name" value="DiS_bond_form_DsbB/BdbC"/>
</dbReference>
<dbReference type="InterPro" id="IPR022920">
    <property type="entry name" value="Disulphide_bond_form_DsbB"/>
</dbReference>
<dbReference type="InterPro" id="IPR050183">
    <property type="entry name" value="DsbB"/>
</dbReference>
<dbReference type="InterPro" id="IPR023380">
    <property type="entry name" value="DsbB-like_sf"/>
</dbReference>
<dbReference type="NCBIfam" id="NF002485">
    <property type="entry name" value="PRK01749.1"/>
    <property type="match status" value="1"/>
</dbReference>
<dbReference type="PANTHER" id="PTHR36570">
    <property type="entry name" value="DISULFIDE BOND FORMATION PROTEIN B"/>
    <property type="match status" value="1"/>
</dbReference>
<dbReference type="PANTHER" id="PTHR36570:SF2">
    <property type="entry name" value="DISULFIDE BOND FORMATION PROTEIN B"/>
    <property type="match status" value="1"/>
</dbReference>
<dbReference type="Pfam" id="PF02600">
    <property type="entry name" value="DsbB"/>
    <property type="match status" value="1"/>
</dbReference>
<dbReference type="SUPFAM" id="SSF158442">
    <property type="entry name" value="DsbB-like"/>
    <property type="match status" value="1"/>
</dbReference>
<gene>
    <name evidence="1" type="primary">dsbB</name>
    <name type="ordered locus">MS0429</name>
</gene>
<name>DSBB_MANSM</name>
<evidence type="ECO:0000255" key="1">
    <source>
        <dbReference type="HAMAP-Rule" id="MF_00286"/>
    </source>
</evidence>
<sequence>MLSFFKTLSMGRSGWLLLAFSALVLELVALYFQYGMQLQPCVMCVYERVALGGILFAGIIGAIAPSSWFFRFLGIIIGLGASVKGFLLALKHVDYQLNPAPWNQCAYLPEFPQTLPLDQWFPYLFKPIGSCSDIQWSFLGFSMAQWILVMFAFYSILLAIILISQVKAGKPKHREIFR</sequence>
<proteinExistence type="inferred from homology"/>